<sequence length="191" mass="20927">MRNVWLIVPFALLAALSGETWAQADRDLYIDSTESSGNYPVDDDDYSSGSGSGIPARGDDEDENVVLTTVQTLISSPSSEMPYVETTTLKTQTKMAPETKEPGEVESTNTVLVYGKKDIVQTATHTENLFHRTEVLAAVIAGGGIGFLFAVFLILLLVYRMRKKDEGSYDLGERKPSSAVYQKAPTKEFYA</sequence>
<name>SDC2A_XENLA</name>
<proteinExistence type="evidence at transcript level"/>
<protein>
    <recommendedName>
        <fullName>Syndecan-2-A</fullName>
        <shortName>SYND2-A</shortName>
    </recommendedName>
</protein>
<reference key="1">
    <citation type="journal article" date="1995" name="Biochem. J.">
        <title>Expression of a Xenopus counterpart of mammalian syndecan 2 during embryogenesis.</title>
        <authorList>
            <person name="Rosenblum N.D."/>
            <person name="Botelho B.B."/>
            <person name="Bernfield M."/>
        </authorList>
    </citation>
    <scope>NUCLEOTIDE SEQUENCE [MRNA]</scope>
</reference>
<reference key="2">
    <citation type="submission" date="2002-12" db="EMBL/GenBank/DDBJ databases">
        <authorList>
            <consortium name="NIH - Xenopus Gene Collection (XGC) project"/>
        </authorList>
    </citation>
    <scope>NUCLEOTIDE SEQUENCE [LARGE SCALE MRNA]</scope>
    <source>
        <tissue>Embryo</tissue>
    </source>
</reference>
<keyword id="KW-0325">Glycoprotein</keyword>
<keyword id="KW-0357">Heparan sulfate</keyword>
<keyword id="KW-0472">Membrane</keyword>
<keyword id="KW-0654">Proteoglycan</keyword>
<keyword id="KW-1185">Reference proteome</keyword>
<keyword id="KW-0732">Signal</keyword>
<keyword id="KW-0812">Transmembrane</keyword>
<keyword id="KW-1133">Transmembrane helix</keyword>
<comment type="function">
    <text>Cell surface proteoglycan.</text>
</comment>
<comment type="subcellular location">
    <subcellularLocation>
        <location>Membrane</location>
        <topology>Single-pass type I membrane protein</topology>
    </subcellularLocation>
</comment>
<comment type="PTM">
    <text evidence="1">O-glycosylated; contains both heparan sulfate and chondroitin sulfate.</text>
</comment>
<comment type="similarity">
    <text evidence="4">Belongs to the syndecan proteoglycan family.</text>
</comment>
<dbReference type="EMBL" id="U24433">
    <property type="protein sequence ID" value="AAA87197.1"/>
    <property type="molecule type" value="mRNA"/>
</dbReference>
<dbReference type="EMBL" id="BC041490">
    <property type="protein sequence ID" value="AAH41490.1"/>
    <property type="molecule type" value="mRNA"/>
</dbReference>
<dbReference type="SMR" id="P49414"/>
<dbReference type="GlyCosmos" id="P49414">
    <property type="glycosylation" value="4 sites, No reported glycans"/>
</dbReference>
<dbReference type="AGR" id="Xenbase:XB-GENE-6254482"/>
<dbReference type="Xenbase" id="XB-GENE-6254482">
    <property type="gene designation" value="sdc2.L"/>
</dbReference>
<dbReference type="Proteomes" id="UP000186698">
    <property type="component" value="Unplaced"/>
</dbReference>
<dbReference type="GO" id="GO:0009986">
    <property type="term" value="C:cell surface"/>
    <property type="evidence" value="ECO:0000318"/>
    <property type="project" value="GO_Central"/>
</dbReference>
<dbReference type="GO" id="GO:0016020">
    <property type="term" value="C:membrane"/>
    <property type="evidence" value="ECO:0007669"/>
    <property type="project" value="UniProtKB-SubCell"/>
</dbReference>
<dbReference type="GO" id="GO:0016477">
    <property type="term" value="P:cell migration"/>
    <property type="evidence" value="ECO:0000318"/>
    <property type="project" value="GO_Central"/>
</dbReference>
<dbReference type="InterPro" id="IPR003585">
    <property type="entry name" value="Neurexin-like"/>
</dbReference>
<dbReference type="InterPro" id="IPR001050">
    <property type="entry name" value="Syndecan"/>
</dbReference>
<dbReference type="InterPro" id="IPR027789">
    <property type="entry name" value="Syndecan/Neurexin_dom"/>
</dbReference>
<dbReference type="InterPro" id="IPR030479">
    <property type="entry name" value="Syndecan_CS"/>
</dbReference>
<dbReference type="PANTHER" id="PTHR10915">
    <property type="entry name" value="SYNDECAN"/>
    <property type="match status" value="1"/>
</dbReference>
<dbReference type="PANTHER" id="PTHR10915:SF6">
    <property type="entry name" value="SYNDECAN-2"/>
    <property type="match status" value="1"/>
</dbReference>
<dbReference type="Pfam" id="PF01034">
    <property type="entry name" value="Syndecan"/>
    <property type="match status" value="1"/>
</dbReference>
<dbReference type="SMART" id="SM00294">
    <property type="entry name" value="4.1m"/>
    <property type="match status" value="1"/>
</dbReference>
<dbReference type="PROSITE" id="PS00964">
    <property type="entry name" value="SYNDECAN"/>
    <property type="match status" value="1"/>
</dbReference>
<gene>
    <name type="primary">sdc2-a</name>
</gene>
<accession>P49414</accession>
<accession>O42473</accession>
<organism>
    <name type="scientific">Xenopus laevis</name>
    <name type="common">African clawed frog</name>
    <dbReference type="NCBI Taxonomy" id="8355"/>
    <lineage>
        <taxon>Eukaryota</taxon>
        <taxon>Metazoa</taxon>
        <taxon>Chordata</taxon>
        <taxon>Craniata</taxon>
        <taxon>Vertebrata</taxon>
        <taxon>Euteleostomi</taxon>
        <taxon>Amphibia</taxon>
        <taxon>Batrachia</taxon>
        <taxon>Anura</taxon>
        <taxon>Pipoidea</taxon>
        <taxon>Pipidae</taxon>
        <taxon>Xenopodinae</taxon>
        <taxon>Xenopus</taxon>
        <taxon>Xenopus</taxon>
    </lineage>
</organism>
<evidence type="ECO:0000250" key="1">
    <source>
        <dbReference type="UniProtKB" id="P43407"/>
    </source>
</evidence>
<evidence type="ECO:0000255" key="2"/>
<evidence type="ECO:0000256" key="3">
    <source>
        <dbReference type="SAM" id="MobiDB-lite"/>
    </source>
</evidence>
<evidence type="ECO:0000305" key="4"/>
<feature type="signal peptide" evidence="2">
    <location>
        <begin position="1"/>
        <end position="22"/>
    </location>
</feature>
<feature type="chain" id="PRO_0000033506" description="Syndecan-2-A">
    <location>
        <begin position="23"/>
        <end position="191"/>
    </location>
</feature>
<feature type="topological domain" description="Extracellular" evidence="2">
    <location>
        <begin position="23"/>
        <end position="137"/>
    </location>
</feature>
<feature type="transmembrane region" description="Helical" evidence="2">
    <location>
        <begin position="138"/>
        <end position="158"/>
    </location>
</feature>
<feature type="topological domain" description="Cytoplasmic" evidence="2">
    <location>
        <begin position="159"/>
        <end position="191"/>
    </location>
</feature>
<feature type="region of interest" description="Disordered" evidence="3">
    <location>
        <begin position="32"/>
        <end position="60"/>
    </location>
</feature>
<feature type="region of interest" description="Disordered" evidence="3">
    <location>
        <begin position="168"/>
        <end position="191"/>
    </location>
</feature>
<feature type="glycosylation site" description="O-linked (Xyl...) (glycosaminoglycan) serine" evidence="2">
    <location>
        <position position="36"/>
    </location>
</feature>
<feature type="glycosylation site" description="O-linked (Xyl...) (glycosaminoglycan) serine" evidence="2">
    <location>
        <position position="48"/>
    </location>
</feature>
<feature type="glycosylation site" description="O-linked (Xyl...) (glycosaminoglycan) serine" evidence="2">
    <location>
        <position position="50"/>
    </location>
</feature>
<feature type="glycosylation site" description="O-linked (Xyl...) (glycosaminoglycan) serine" evidence="2">
    <location>
        <position position="52"/>
    </location>
</feature>
<feature type="sequence conflict" description="In Ref. 1; AAA87197." evidence="4" ref="1">
    <original>Q</original>
    <variation>L</variation>
    <location>
        <position position="92"/>
    </location>
</feature>
<feature type="sequence conflict" description="In Ref. 1; AAA87197." evidence="4" ref="1">
    <original>R</original>
    <variation>G</variation>
    <location>
        <position position="174"/>
    </location>
</feature>
<feature type="sequence conflict" description="In Ref. 1; AAA87197." evidence="4" ref="1">
    <original>S</original>
    <variation>R</variation>
    <location>
        <position position="178"/>
    </location>
</feature>